<dbReference type="EMBL" id="CP001079">
    <property type="protein sequence ID" value="ACM49520.1"/>
    <property type="molecule type" value="Genomic_DNA"/>
</dbReference>
<dbReference type="SMR" id="B9KJ58"/>
<dbReference type="STRING" id="320483.AMF_684"/>
<dbReference type="KEGG" id="amf:AMF_684"/>
<dbReference type="eggNOG" id="COG0094">
    <property type="taxonomic scope" value="Bacteria"/>
</dbReference>
<dbReference type="HOGENOM" id="CLU_061015_2_1_5"/>
<dbReference type="Proteomes" id="UP000007307">
    <property type="component" value="Chromosome"/>
</dbReference>
<dbReference type="GO" id="GO:1990904">
    <property type="term" value="C:ribonucleoprotein complex"/>
    <property type="evidence" value="ECO:0007669"/>
    <property type="project" value="UniProtKB-KW"/>
</dbReference>
<dbReference type="GO" id="GO:0005840">
    <property type="term" value="C:ribosome"/>
    <property type="evidence" value="ECO:0007669"/>
    <property type="project" value="UniProtKB-KW"/>
</dbReference>
<dbReference type="GO" id="GO:0019843">
    <property type="term" value="F:rRNA binding"/>
    <property type="evidence" value="ECO:0007669"/>
    <property type="project" value="UniProtKB-UniRule"/>
</dbReference>
<dbReference type="GO" id="GO:0003735">
    <property type="term" value="F:structural constituent of ribosome"/>
    <property type="evidence" value="ECO:0007669"/>
    <property type="project" value="InterPro"/>
</dbReference>
<dbReference type="GO" id="GO:0000049">
    <property type="term" value="F:tRNA binding"/>
    <property type="evidence" value="ECO:0007669"/>
    <property type="project" value="UniProtKB-UniRule"/>
</dbReference>
<dbReference type="GO" id="GO:0006412">
    <property type="term" value="P:translation"/>
    <property type="evidence" value="ECO:0007669"/>
    <property type="project" value="UniProtKB-UniRule"/>
</dbReference>
<dbReference type="FunFam" id="3.30.1440.10:FF:000001">
    <property type="entry name" value="50S ribosomal protein L5"/>
    <property type="match status" value="1"/>
</dbReference>
<dbReference type="Gene3D" id="3.30.1440.10">
    <property type="match status" value="1"/>
</dbReference>
<dbReference type="HAMAP" id="MF_01333_B">
    <property type="entry name" value="Ribosomal_uL5_B"/>
    <property type="match status" value="1"/>
</dbReference>
<dbReference type="InterPro" id="IPR002132">
    <property type="entry name" value="Ribosomal_uL5"/>
</dbReference>
<dbReference type="InterPro" id="IPR020930">
    <property type="entry name" value="Ribosomal_uL5_bac-type"/>
</dbReference>
<dbReference type="InterPro" id="IPR031309">
    <property type="entry name" value="Ribosomal_uL5_C"/>
</dbReference>
<dbReference type="InterPro" id="IPR022803">
    <property type="entry name" value="Ribosomal_uL5_dom_sf"/>
</dbReference>
<dbReference type="InterPro" id="IPR031310">
    <property type="entry name" value="Ribosomal_uL5_N"/>
</dbReference>
<dbReference type="NCBIfam" id="NF000585">
    <property type="entry name" value="PRK00010.1"/>
    <property type="match status" value="1"/>
</dbReference>
<dbReference type="PANTHER" id="PTHR11994">
    <property type="entry name" value="60S RIBOSOMAL PROTEIN L11-RELATED"/>
    <property type="match status" value="1"/>
</dbReference>
<dbReference type="Pfam" id="PF00281">
    <property type="entry name" value="Ribosomal_L5"/>
    <property type="match status" value="1"/>
</dbReference>
<dbReference type="Pfam" id="PF00673">
    <property type="entry name" value="Ribosomal_L5_C"/>
    <property type="match status" value="1"/>
</dbReference>
<dbReference type="PIRSF" id="PIRSF002161">
    <property type="entry name" value="Ribosomal_L5"/>
    <property type="match status" value="1"/>
</dbReference>
<dbReference type="SUPFAM" id="SSF55282">
    <property type="entry name" value="RL5-like"/>
    <property type="match status" value="1"/>
</dbReference>
<keyword id="KW-1185">Reference proteome</keyword>
<keyword id="KW-0687">Ribonucleoprotein</keyword>
<keyword id="KW-0689">Ribosomal protein</keyword>
<keyword id="KW-0694">RNA-binding</keyword>
<keyword id="KW-0699">rRNA-binding</keyword>
<keyword id="KW-0820">tRNA-binding</keyword>
<comment type="function">
    <text evidence="1">This is one of the proteins that bind and probably mediate the attachment of the 5S RNA into the large ribosomal subunit, where it forms part of the central protuberance. In the 70S ribosome it contacts protein S13 of the 30S subunit (bridge B1b), connecting the 2 subunits; this bridge is implicated in subunit movement. Contacts the P site tRNA; the 5S rRNA and some of its associated proteins might help stabilize positioning of ribosome-bound tRNAs.</text>
</comment>
<comment type="subunit">
    <text evidence="1">Part of the 50S ribosomal subunit; part of the 5S rRNA/L5/L18/L25 subcomplex. Contacts the 5S rRNA and the P site tRNA. Forms a bridge to the 30S subunit in the 70S ribosome.</text>
</comment>
<comment type="similarity">
    <text evidence="1">Belongs to the universal ribosomal protein uL5 family.</text>
</comment>
<accession>B9KJ58</accession>
<name>RL5_ANAMF</name>
<feature type="chain" id="PRO_1000166104" description="Large ribosomal subunit protein uL5">
    <location>
        <begin position="1"/>
        <end position="179"/>
    </location>
</feature>
<sequence>MYMLGSLCKEAVAQSLMSKLGCSSVMQVPKVVKVCLNMGIGIGAMDSKVMDSCSRDLALISAQKPVVTRARRSIAGFKIRKGFPIGCMVTLRGKKMYEFLDRLINIALPRERDFKGLSMSQFDGHGNISFGVKEHISFLEVDYDKIDKVRGFDVSVVTTAKSDYDAKALLTELGFPFVN</sequence>
<reference key="1">
    <citation type="journal article" date="2009" name="BMC Genomics">
        <title>Conservation in the face of diversity: multistrain analysis of an intracellular bacterium.</title>
        <authorList>
            <person name="Dark M.J."/>
            <person name="Herndon D.R."/>
            <person name="Kappmeyer L.S."/>
            <person name="Gonzales M.P."/>
            <person name="Nordeen E."/>
            <person name="Palmer G.H."/>
            <person name="Knowles D.P. Jr."/>
            <person name="Brayton K.A."/>
        </authorList>
    </citation>
    <scope>NUCLEOTIDE SEQUENCE [LARGE SCALE GENOMIC DNA]</scope>
    <source>
        <strain>Florida</strain>
    </source>
</reference>
<organism>
    <name type="scientific">Anaplasma marginale (strain Florida)</name>
    <dbReference type="NCBI Taxonomy" id="320483"/>
    <lineage>
        <taxon>Bacteria</taxon>
        <taxon>Pseudomonadati</taxon>
        <taxon>Pseudomonadota</taxon>
        <taxon>Alphaproteobacteria</taxon>
        <taxon>Rickettsiales</taxon>
        <taxon>Anaplasmataceae</taxon>
        <taxon>Anaplasma</taxon>
    </lineage>
</organism>
<proteinExistence type="inferred from homology"/>
<gene>
    <name evidence="1" type="primary">rplE</name>
    <name type="ordered locus">AMF_684</name>
</gene>
<protein>
    <recommendedName>
        <fullName evidence="1">Large ribosomal subunit protein uL5</fullName>
    </recommendedName>
    <alternativeName>
        <fullName evidence="2">50S ribosomal protein L5</fullName>
    </alternativeName>
</protein>
<evidence type="ECO:0000255" key="1">
    <source>
        <dbReference type="HAMAP-Rule" id="MF_01333"/>
    </source>
</evidence>
<evidence type="ECO:0000305" key="2"/>